<reference key="1">
    <citation type="journal article" date="2008" name="Antimicrob. Agents Chemother.">
        <title>Whole-genome pyrosequencing of an epidemic multidrug-resistant Acinetobacter baumannii strain belonging to the European clone II group.</title>
        <authorList>
            <person name="Iacono M."/>
            <person name="Villa L."/>
            <person name="Fortini D."/>
            <person name="Bordoni R."/>
            <person name="Imperi F."/>
            <person name="Bonnal R.J."/>
            <person name="Sicheritz-Ponten T."/>
            <person name="De Bellis G."/>
            <person name="Visca P."/>
            <person name="Cassone A."/>
            <person name="Carattoli A."/>
        </authorList>
    </citation>
    <scope>NUCLEOTIDE SEQUENCE [LARGE SCALE GENOMIC DNA]</scope>
    <source>
        <strain>ACICU</strain>
    </source>
</reference>
<accession>B2HZB6</accession>
<sequence length="395" mass="41274">MNFQRMTDLNLAGKRVLIREDLNVPVKNGVITSDARLRAALPTIKAALEKGAAVMVFSHLGRPVEGEPKPEQSLAPVAAYLTEALGQEVKLFTDYLNGVEVEAGQVVLLENVRFNPGEKKNNPELAQKYAALCDVFVMDAFGTAHRAEASTEGVARFAPVAAAGPLLAAELDALGRAMQTPEKPMVAIVAGSKVSTKLDVLNSLSGICDQLIVGGGIANTFLAAAGYNVGKSLYEADLVETAKQIAAKVSVPLPTDVVVADASQINFEDFLGSLAAAQAVIKKVEDVTANDMILDVGPETAKAFANILTTSKTILWNGPVGVFEVDQFGEGTKALSLAVAQSDAFSIAGGGDTLAAIDKYNVADQIGYISTGGGAFLEFVEGKTLPAVAVLLERA</sequence>
<evidence type="ECO:0000255" key="1">
    <source>
        <dbReference type="HAMAP-Rule" id="MF_00145"/>
    </source>
</evidence>
<feature type="chain" id="PRO_1000096311" description="Phosphoglycerate kinase">
    <location>
        <begin position="1"/>
        <end position="395"/>
    </location>
</feature>
<feature type="binding site" evidence="1">
    <location>
        <begin position="21"/>
        <end position="23"/>
    </location>
    <ligand>
        <name>substrate</name>
    </ligand>
</feature>
<feature type="binding site" evidence="1">
    <location>
        <position position="36"/>
    </location>
    <ligand>
        <name>substrate</name>
    </ligand>
</feature>
<feature type="binding site" evidence="1">
    <location>
        <begin position="59"/>
        <end position="62"/>
    </location>
    <ligand>
        <name>substrate</name>
    </ligand>
</feature>
<feature type="binding site" evidence="1">
    <location>
        <position position="113"/>
    </location>
    <ligand>
        <name>substrate</name>
    </ligand>
</feature>
<feature type="binding site" evidence="1">
    <location>
        <position position="146"/>
    </location>
    <ligand>
        <name>substrate</name>
    </ligand>
</feature>
<feature type="binding site" evidence="1">
    <location>
        <position position="197"/>
    </location>
    <ligand>
        <name>ATP</name>
        <dbReference type="ChEBI" id="CHEBI:30616"/>
    </ligand>
</feature>
<feature type="binding site" evidence="1">
    <location>
        <position position="324"/>
    </location>
    <ligand>
        <name>ATP</name>
        <dbReference type="ChEBI" id="CHEBI:30616"/>
    </ligand>
</feature>
<feature type="binding site" evidence="1">
    <location>
        <begin position="350"/>
        <end position="353"/>
    </location>
    <ligand>
        <name>ATP</name>
        <dbReference type="ChEBI" id="CHEBI:30616"/>
    </ligand>
</feature>
<keyword id="KW-0067">ATP-binding</keyword>
<keyword id="KW-0963">Cytoplasm</keyword>
<keyword id="KW-0324">Glycolysis</keyword>
<keyword id="KW-0418">Kinase</keyword>
<keyword id="KW-0547">Nucleotide-binding</keyword>
<keyword id="KW-0808">Transferase</keyword>
<proteinExistence type="inferred from homology"/>
<organism>
    <name type="scientific">Acinetobacter baumannii (strain ACICU)</name>
    <dbReference type="NCBI Taxonomy" id="405416"/>
    <lineage>
        <taxon>Bacteria</taxon>
        <taxon>Pseudomonadati</taxon>
        <taxon>Pseudomonadota</taxon>
        <taxon>Gammaproteobacteria</taxon>
        <taxon>Moraxellales</taxon>
        <taxon>Moraxellaceae</taxon>
        <taxon>Acinetobacter</taxon>
        <taxon>Acinetobacter calcoaceticus/baumannii complex</taxon>
    </lineage>
</organism>
<gene>
    <name evidence="1" type="primary">pgk</name>
    <name type="ordered locus">ACICU_01590</name>
</gene>
<name>PGK_ACIBC</name>
<comment type="catalytic activity">
    <reaction evidence="1">
        <text>(2R)-3-phosphoglycerate + ATP = (2R)-3-phospho-glyceroyl phosphate + ADP</text>
        <dbReference type="Rhea" id="RHEA:14801"/>
        <dbReference type="ChEBI" id="CHEBI:30616"/>
        <dbReference type="ChEBI" id="CHEBI:57604"/>
        <dbReference type="ChEBI" id="CHEBI:58272"/>
        <dbReference type="ChEBI" id="CHEBI:456216"/>
        <dbReference type="EC" id="2.7.2.3"/>
    </reaction>
</comment>
<comment type="pathway">
    <text evidence="1">Carbohydrate degradation; glycolysis; pyruvate from D-glyceraldehyde 3-phosphate: step 2/5.</text>
</comment>
<comment type="subunit">
    <text evidence="1">Monomer.</text>
</comment>
<comment type="subcellular location">
    <subcellularLocation>
        <location evidence="1">Cytoplasm</location>
    </subcellularLocation>
</comment>
<comment type="similarity">
    <text evidence="1">Belongs to the phosphoglycerate kinase family.</text>
</comment>
<protein>
    <recommendedName>
        <fullName evidence="1">Phosphoglycerate kinase</fullName>
        <ecNumber evidence="1">2.7.2.3</ecNumber>
    </recommendedName>
</protein>
<dbReference type="EC" id="2.7.2.3" evidence="1"/>
<dbReference type="EMBL" id="CP000863">
    <property type="protein sequence ID" value="ACC56902.1"/>
    <property type="molecule type" value="Genomic_DNA"/>
</dbReference>
<dbReference type="RefSeq" id="WP_001011094.1">
    <property type="nucleotide sequence ID" value="NZ_CP031380.1"/>
</dbReference>
<dbReference type="SMR" id="B2HZB6"/>
<dbReference type="KEGG" id="abc:ACICU_01590"/>
<dbReference type="HOGENOM" id="CLU_025427_0_2_6"/>
<dbReference type="UniPathway" id="UPA00109">
    <property type="reaction ID" value="UER00185"/>
</dbReference>
<dbReference type="Proteomes" id="UP000008839">
    <property type="component" value="Chromosome"/>
</dbReference>
<dbReference type="GO" id="GO:0005829">
    <property type="term" value="C:cytosol"/>
    <property type="evidence" value="ECO:0007669"/>
    <property type="project" value="TreeGrafter"/>
</dbReference>
<dbReference type="GO" id="GO:0043531">
    <property type="term" value="F:ADP binding"/>
    <property type="evidence" value="ECO:0007669"/>
    <property type="project" value="TreeGrafter"/>
</dbReference>
<dbReference type="GO" id="GO:0005524">
    <property type="term" value="F:ATP binding"/>
    <property type="evidence" value="ECO:0007669"/>
    <property type="project" value="UniProtKB-KW"/>
</dbReference>
<dbReference type="GO" id="GO:0004618">
    <property type="term" value="F:phosphoglycerate kinase activity"/>
    <property type="evidence" value="ECO:0007669"/>
    <property type="project" value="UniProtKB-UniRule"/>
</dbReference>
<dbReference type="GO" id="GO:0006094">
    <property type="term" value="P:gluconeogenesis"/>
    <property type="evidence" value="ECO:0007669"/>
    <property type="project" value="TreeGrafter"/>
</dbReference>
<dbReference type="GO" id="GO:0006096">
    <property type="term" value="P:glycolytic process"/>
    <property type="evidence" value="ECO:0007669"/>
    <property type="project" value="UniProtKB-UniRule"/>
</dbReference>
<dbReference type="FunFam" id="3.40.50.1260:FF:000001">
    <property type="entry name" value="Phosphoglycerate kinase"/>
    <property type="match status" value="1"/>
</dbReference>
<dbReference type="FunFam" id="3.40.50.1260:FF:000002">
    <property type="entry name" value="Phosphoglycerate kinase"/>
    <property type="match status" value="1"/>
</dbReference>
<dbReference type="Gene3D" id="3.40.50.1260">
    <property type="entry name" value="Phosphoglycerate kinase, N-terminal domain"/>
    <property type="match status" value="2"/>
</dbReference>
<dbReference type="HAMAP" id="MF_00145">
    <property type="entry name" value="Phosphoglyc_kinase"/>
    <property type="match status" value="1"/>
</dbReference>
<dbReference type="InterPro" id="IPR001576">
    <property type="entry name" value="Phosphoglycerate_kinase"/>
</dbReference>
<dbReference type="InterPro" id="IPR015911">
    <property type="entry name" value="Phosphoglycerate_kinase_CS"/>
</dbReference>
<dbReference type="InterPro" id="IPR015824">
    <property type="entry name" value="Phosphoglycerate_kinase_N"/>
</dbReference>
<dbReference type="InterPro" id="IPR036043">
    <property type="entry name" value="Phosphoglycerate_kinase_sf"/>
</dbReference>
<dbReference type="PANTHER" id="PTHR11406">
    <property type="entry name" value="PHOSPHOGLYCERATE KINASE"/>
    <property type="match status" value="1"/>
</dbReference>
<dbReference type="PANTHER" id="PTHR11406:SF23">
    <property type="entry name" value="PHOSPHOGLYCERATE KINASE 1, CHLOROPLASTIC-RELATED"/>
    <property type="match status" value="1"/>
</dbReference>
<dbReference type="Pfam" id="PF00162">
    <property type="entry name" value="PGK"/>
    <property type="match status" value="1"/>
</dbReference>
<dbReference type="PIRSF" id="PIRSF000724">
    <property type="entry name" value="Pgk"/>
    <property type="match status" value="1"/>
</dbReference>
<dbReference type="PRINTS" id="PR00477">
    <property type="entry name" value="PHGLYCKINASE"/>
</dbReference>
<dbReference type="SUPFAM" id="SSF53748">
    <property type="entry name" value="Phosphoglycerate kinase"/>
    <property type="match status" value="1"/>
</dbReference>
<dbReference type="PROSITE" id="PS00111">
    <property type="entry name" value="PGLYCERATE_KINASE"/>
    <property type="match status" value="1"/>
</dbReference>